<accession>Q8D8R2</accession>
<reference key="1">
    <citation type="submission" date="2002-12" db="EMBL/GenBank/DDBJ databases">
        <title>Complete genome sequence of Vibrio vulnificus CMCP6.</title>
        <authorList>
            <person name="Rhee J.H."/>
            <person name="Kim S.Y."/>
            <person name="Chung S.S."/>
            <person name="Kim J.J."/>
            <person name="Moon Y.H."/>
            <person name="Jeong H."/>
            <person name="Choy H.E."/>
        </authorList>
    </citation>
    <scope>NUCLEOTIDE SEQUENCE [LARGE SCALE GENOMIC DNA]</scope>
    <source>
        <strain>CMCP6</strain>
    </source>
</reference>
<evidence type="ECO:0000255" key="1">
    <source>
        <dbReference type="HAMAP-Rule" id="MF_00124"/>
    </source>
</evidence>
<keyword id="KW-0067">ATP-binding</keyword>
<keyword id="KW-0963">Cytoplasm</keyword>
<keyword id="KW-0237">DNA synthesis</keyword>
<keyword id="KW-0418">Kinase</keyword>
<keyword id="KW-0479">Metal-binding</keyword>
<keyword id="KW-0547">Nucleotide-binding</keyword>
<keyword id="KW-0808">Transferase</keyword>
<keyword id="KW-0862">Zinc</keyword>
<dbReference type="EC" id="2.7.1.21" evidence="1"/>
<dbReference type="EMBL" id="AE016795">
    <property type="protein sequence ID" value="AAO11240.2"/>
    <property type="molecule type" value="Genomic_DNA"/>
</dbReference>
<dbReference type="RefSeq" id="WP_011080727.1">
    <property type="nucleotide sequence ID" value="NC_004459.3"/>
</dbReference>
<dbReference type="SMR" id="Q8D8R2"/>
<dbReference type="KEGG" id="vvu:VV1_2907"/>
<dbReference type="HOGENOM" id="CLU_064400_2_1_6"/>
<dbReference type="Proteomes" id="UP000002275">
    <property type="component" value="Chromosome 1"/>
</dbReference>
<dbReference type="GO" id="GO:0005829">
    <property type="term" value="C:cytosol"/>
    <property type="evidence" value="ECO:0007669"/>
    <property type="project" value="TreeGrafter"/>
</dbReference>
<dbReference type="GO" id="GO:0005524">
    <property type="term" value="F:ATP binding"/>
    <property type="evidence" value="ECO:0007669"/>
    <property type="project" value="UniProtKB-UniRule"/>
</dbReference>
<dbReference type="GO" id="GO:0004797">
    <property type="term" value="F:thymidine kinase activity"/>
    <property type="evidence" value="ECO:0007669"/>
    <property type="project" value="UniProtKB-UniRule"/>
</dbReference>
<dbReference type="GO" id="GO:0008270">
    <property type="term" value="F:zinc ion binding"/>
    <property type="evidence" value="ECO:0007669"/>
    <property type="project" value="UniProtKB-UniRule"/>
</dbReference>
<dbReference type="GO" id="GO:0071897">
    <property type="term" value="P:DNA biosynthetic process"/>
    <property type="evidence" value="ECO:0007669"/>
    <property type="project" value="UniProtKB-KW"/>
</dbReference>
<dbReference type="GO" id="GO:0046104">
    <property type="term" value="P:thymidine metabolic process"/>
    <property type="evidence" value="ECO:0007669"/>
    <property type="project" value="TreeGrafter"/>
</dbReference>
<dbReference type="FunFam" id="3.30.60.20:FF:000017">
    <property type="entry name" value="Thymidine kinase"/>
    <property type="match status" value="1"/>
</dbReference>
<dbReference type="FunFam" id="3.40.50.300:FF:000323">
    <property type="entry name" value="Thymidine kinase"/>
    <property type="match status" value="1"/>
</dbReference>
<dbReference type="Gene3D" id="3.30.60.20">
    <property type="match status" value="1"/>
</dbReference>
<dbReference type="Gene3D" id="3.40.50.300">
    <property type="entry name" value="P-loop containing nucleotide triphosphate hydrolases"/>
    <property type="match status" value="1"/>
</dbReference>
<dbReference type="HAMAP" id="MF_00124">
    <property type="entry name" value="Thymidine_kinase"/>
    <property type="match status" value="1"/>
</dbReference>
<dbReference type="InterPro" id="IPR027417">
    <property type="entry name" value="P-loop_NTPase"/>
</dbReference>
<dbReference type="InterPro" id="IPR001267">
    <property type="entry name" value="Thymidine_kinase"/>
</dbReference>
<dbReference type="InterPro" id="IPR020633">
    <property type="entry name" value="Thymidine_kinase_CS"/>
</dbReference>
<dbReference type="NCBIfam" id="NF003300">
    <property type="entry name" value="PRK04296.1-5"/>
    <property type="match status" value="1"/>
</dbReference>
<dbReference type="PANTHER" id="PTHR11441">
    <property type="entry name" value="THYMIDINE KINASE"/>
    <property type="match status" value="1"/>
</dbReference>
<dbReference type="PANTHER" id="PTHR11441:SF0">
    <property type="entry name" value="THYMIDINE KINASE, CYTOSOLIC"/>
    <property type="match status" value="1"/>
</dbReference>
<dbReference type="Pfam" id="PF00265">
    <property type="entry name" value="TK"/>
    <property type="match status" value="1"/>
</dbReference>
<dbReference type="PIRSF" id="PIRSF035805">
    <property type="entry name" value="TK_cell"/>
    <property type="match status" value="1"/>
</dbReference>
<dbReference type="SUPFAM" id="SSF57716">
    <property type="entry name" value="Glucocorticoid receptor-like (DNA-binding domain)"/>
    <property type="match status" value="1"/>
</dbReference>
<dbReference type="SUPFAM" id="SSF52540">
    <property type="entry name" value="P-loop containing nucleoside triphosphate hydrolases"/>
    <property type="match status" value="1"/>
</dbReference>
<dbReference type="PROSITE" id="PS00603">
    <property type="entry name" value="TK_CELLULAR_TYPE"/>
    <property type="match status" value="1"/>
</dbReference>
<sequence>MAQMYFYYSAMNAGKSTTLLQSSFNYQERGMTPVIFTAALDDRYGIGKVSSRIGLQAEAQLFKADTNLYQEIAALNEVEKRHCILVDECQFLSKEQVYQLTEVVDKLHIPVLCYGLRTDFLGELFEGSKYLLSWADKLVELKTICHCGRKANMVIRTDEHGKAIKEGDQVAIGGNDRYVSVCRQHYKEALGK</sequence>
<name>KITH_VIBVU</name>
<gene>
    <name evidence="1" type="primary">tdk</name>
    <name type="ordered locus">VV1_2907</name>
</gene>
<proteinExistence type="inferred from homology"/>
<protein>
    <recommendedName>
        <fullName evidence="1">Thymidine kinase</fullName>
        <ecNumber evidence="1">2.7.1.21</ecNumber>
    </recommendedName>
</protein>
<comment type="catalytic activity">
    <reaction evidence="1">
        <text>thymidine + ATP = dTMP + ADP + H(+)</text>
        <dbReference type="Rhea" id="RHEA:19129"/>
        <dbReference type="ChEBI" id="CHEBI:15378"/>
        <dbReference type="ChEBI" id="CHEBI:17748"/>
        <dbReference type="ChEBI" id="CHEBI:30616"/>
        <dbReference type="ChEBI" id="CHEBI:63528"/>
        <dbReference type="ChEBI" id="CHEBI:456216"/>
        <dbReference type="EC" id="2.7.1.21"/>
    </reaction>
</comment>
<comment type="subunit">
    <text evidence="1">Homotetramer.</text>
</comment>
<comment type="subcellular location">
    <subcellularLocation>
        <location evidence="1">Cytoplasm</location>
    </subcellularLocation>
</comment>
<comment type="similarity">
    <text evidence="1">Belongs to the thymidine kinase family.</text>
</comment>
<organism>
    <name type="scientific">Vibrio vulnificus (strain CMCP6)</name>
    <dbReference type="NCBI Taxonomy" id="216895"/>
    <lineage>
        <taxon>Bacteria</taxon>
        <taxon>Pseudomonadati</taxon>
        <taxon>Pseudomonadota</taxon>
        <taxon>Gammaproteobacteria</taxon>
        <taxon>Vibrionales</taxon>
        <taxon>Vibrionaceae</taxon>
        <taxon>Vibrio</taxon>
    </lineage>
</organism>
<feature type="chain" id="PRO_0000175046" description="Thymidine kinase">
    <location>
        <begin position="1"/>
        <end position="192"/>
    </location>
</feature>
<feature type="active site" description="Proton acceptor" evidence="1">
    <location>
        <position position="88"/>
    </location>
</feature>
<feature type="binding site" evidence="1">
    <location>
        <begin position="9"/>
        <end position="16"/>
    </location>
    <ligand>
        <name>ATP</name>
        <dbReference type="ChEBI" id="CHEBI:30616"/>
    </ligand>
</feature>
<feature type="binding site" evidence="1">
    <location>
        <begin position="87"/>
        <end position="90"/>
    </location>
    <ligand>
        <name>ATP</name>
        <dbReference type="ChEBI" id="CHEBI:30616"/>
    </ligand>
</feature>
<feature type="binding site" evidence="1">
    <location>
        <position position="145"/>
    </location>
    <ligand>
        <name>Zn(2+)</name>
        <dbReference type="ChEBI" id="CHEBI:29105"/>
    </ligand>
</feature>
<feature type="binding site" evidence="1">
    <location>
        <position position="147"/>
    </location>
    <ligand>
        <name>Zn(2+)</name>
        <dbReference type="ChEBI" id="CHEBI:29105"/>
    </ligand>
</feature>
<feature type="binding site" evidence="1">
    <location>
        <position position="182"/>
    </location>
    <ligand>
        <name>Zn(2+)</name>
        <dbReference type="ChEBI" id="CHEBI:29105"/>
    </ligand>
</feature>
<feature type="binding site" evidence="1">
    <location>
        <position position="185"/>
    </location>
    <ligand>
        <name>Zn(2+)</name>
        <dbReference type="ChEBI" id="CHEBI:29105"/>
    </ligand>
</feature>